<dbReference type="EMBL" id="X80892">
    <property type="protein sequence ID" value="CAA56854.1"/>
    <property type="molecule type" value="Genomic_DNA"/>
</dbReference>
<dbReference type="EMBL" id="AL513382">
    <property type="protein sequence ID" value="CAD05984.1"/>
    <property type="molecule type" value="Genomic_DNA"/>
</dbReference>
<dbReference type="EMBL" id="AE014613">
    <property type="protein sequence ID" value="AAO70340.1"/>
    <property type="molecule type" value="Genomic_DNA"/>
</dbReference>
<dbReference type="RefSeq" id="NP_457271.1">
    <property type="nucleotide sequence ID" value="NC_003198.1"/>
</dbReference>
<dbReference type="RefSeq" id="WP_000558926.1">
    <property type="nucleotide sequence ID" value="NZ_WSUR01000005.1"/>
</dbReference>
<dbReference type="SMR" id="P43018"/>
<dbReference type="STRING" id="220341.gene:17586894"/>
<dbReference type="CAZy" id="GH23">
    <property type="family name" value="Glycoside Hydrolase Family 23"/>
</dbReference>
<dbReference type="KEGG" id="stt:t2779"/>
<dbReference type="KEGG" id="sty:STY3000"/>
<dbReference type="PATRIC" id="fig|220341.7.peg.3054"/>
<dbReference type="eggNOG" id="COG0741">
    <property type="taxonomic scope" value="Bacteria"/>
</dbReference>
<dbReference type="HOGENOM" id="CLU_094905_1_0_6"/>
<dbReference type="OMA" id="EPCTSIM"/>
<dbReference type="OrthoDB" id="9808681at2"/>
<dbReference type="PHI-base" id="PHI:636"/>
<dbReference type="Proteomes" id="UP000000541">
    <property type="component" value="Chromosome"/>
</dbReference>
<dbReference type="Proteomes" id="UP000002670">
    <property type="component" value="Chromosome"/>
</dbReference>
<dbReference type="CDD" id="cd13400">
    <property type="entry name" value="LT_IagB-like"/>
    <property type="match status" value="1"/>
</dbReference>
<dbReference type="Gene3D" id="1.10.530.10">
    <property type="match status" value="1"/>
</dbReference>
<dbReference type="InterPro" id="IPR023346">
    <property type="entry name" value="Lysozyme-like_dom_sf"/>
</dbReference>
<dbReference type="InterPro" id="IPR008258">
    <property type="entry name" value="Transglycosylase_SLT_dom_1"/>
</dbReference>
<dbReference type="NCBIfam" id="NF011856">
    <property type="entry name" value="PRK15328.1"/>
    <property type="match status" value="1"/>
</dbReference>
<dbReference type="Pfam" id="PF01464">
    <property type="entry name" value="SLT"/>
    <property type="match status" value="1"/>
</dbReference>
<dbReference type="SUPFAM" id="SSF53955">
    <property type="entry name" value="Lysozyme-like"/>
    <property type="match status" value="1"/>
</dbReference>
<name>IAGB_SALTI</name>
<keyword id="KW-0732">Signal</keyword>
<keyword id="KW-0843">Virulence</keyword>
<gene>
    <name type="primary">iagB</name>
    <name type="ordered locus">STY3000</name>
    <name type="ordered locus">t2779</name>
</gene>
<protein>
    <recommendedName>
        <fullName>Invasion protein IagB</fullName>
    </recommendedName>
</protein>
<comment type="similarity">
    <text evidence="2">Belongs to the IagB/IpgF/P19 family.</text>
</comment>
<reference key="1">
    <citation type="journal article" date="1995" name="Res. Microbiol.">
        <title>Nucleotide sequence of iagA and iagB genes involved in invasion of HeLa cells by Salmonella enterica subsp. enterica ser. Typhi.</title>
        <authorList>
            <person name="Miras I."/>
            <person name="Hermant D."/>
            <person name="Arricau N."/>
            <person name="Popoff M.Y."/>
        </authorList>
    </citation>
    <scope>NUCLEOTIDE SEQUENCE [GENOMIC DNA]</scope>
    <source>
        <strain>ATCC 700931 / Ty2</strain>
    </source>
</reference>
<reference key="2">
    <citation type="journal article" date="2001" name="Nature">
        <title>Complete genome sequence of a multiple drug resistant Salmonella enterica serovar Typhi CT18.</title>
        <authorList>
            <person name="Parkhill J."/>
            <person name="Dougan G."/>
            <person name="James K.D."/>
            <person name="Thomson N.R."/>
            <person name="Pickard D."/>
            <person name="Wain J."/>
            <person name="Churcher C.M."/>
            <person name="Mungall K.L."/>
            <person name="Bentley S.D."/>
            <person name="Holden M.T.G."/>
            <person name="Sebaihia M."/>
            <person name="Baker S."/>
            <person name="Basham D."/>
            <person name="Brooks K."/>
            <person name="Chillingworth T."/>
            <person name="Connerton P."/>
            <person name="Cronin A."/>
            <person name="Davis P."/>
            <person name="Davies R.M."/>
            <person name="Dowd L."/>
            <person name="White N."/>
            <person name="Farrar J."/>
            <person name="Feltwell T."/>
            <person name="Hamlin N."/>
            <person name="Haque A."/>
            <person name="Hien T.T."/>
            <person name="Holroyd S."/>
            <person name="Jagels K."/>
            <person name="Krogh A."/>
            <person name="Larsen T.S."/>
            <person name="Leather S."/>
            <person name="Moule S."/>
            <person name="O'Gaora P."/>
            <person name="Parry C."/>
            <person name="Quail M.A."/>
            <person name="Rutherford K.M."/>
            <person name="Simmonds M."/>
            <person name="Skelton J."/>
            <person name="Stevens K."/>
            <person name="Whitehead S."/>
            <person name="Barrell B.G."/>
        </authorList>
    </citation>
    <scope>NUCLEOTIDE SEQUENCE [LARGE SCALE GENOMIC DNA]</scope>
    <source>
        <strain>CT18</strain>
    </source>
</reference>
<reference key="3">
    <citation type="journal article" date="2003" name="J. Bacteriol.">
        <title>Comparative genomics of Salmonella enterica serovar Typhi strains Ty2 and CT18.</title>
        <authorList>
            <person name="Deng W."/>
            <person name="Liou S.-R."/>
            <person name="Plunkett G. III"/>
            <person name="Mayhew G.F."/>
            <person name="Rose D.J."/>
            <person name="Burland V."/>
            <person name="Kodoyianni V."/>
            <person name="Schwartz D.C."/>
            <person name="Blattner F.R."/>
        </authorList>
    </citation>
    <scope>NUCLEOTIDE SEQUENCE [LARGE SCALE GENOMIC DNA]</scope>
    <source>
        <strain>ATCC 700931 / Ty2</strain>
    </source>
</reference>
<proteinExistence type="inferred from homology"/>
<accession>P43018</accession>
<organism>
    <name type="scientific">Salmonella typhi</name>
    <dbReference type="NCBI Taxonomy" id="90370"/>
    <lineage>
        <taxon>Bacteria</taxon>
        <taxon>Pseudomonadati</taxon>
        <taxon>Pseudomonadota</taxon>
        <taxon>Gammaproteobacteria</taxon>
        <taxon>Enterobacterales</taxon>
        <taxon>Enterobacteriaceae</taxon>
        <taxon>Salmonella</taxon>
    </lineage>
</organism>
<evidence type="ECO:0000255" key="1"/>
<evidence type="ECO:0000305" key="2"/>
<sequence>MHYFFIIVIWLLSINTAWADCWLQAEKMFNIESELLYAIAQQESAMKPGAIGHNRDGSTDLGLMQINSFHMKRLKKMGISEKQLLQDPCISVIVGASILSDMMKIYGFSWEAVGAYNAGTSPKRSDIRKRYAKKIWENYRKLKEMSAEEKNKRLSIAVNK</sequence>
<feature type="signal peptide" evidence="1">
    <location>
        <begin position="1"/>
        <end position="19"/>
    </location>
</feature>
<feature type="chain" id="PRO_0000084125" description="Invasion protein IagB">
    <location>
        <begin position="20"/>
        <end position="160"/>
    </location>
</feature>